<comment type="function">
    <text evidence="1">Catalyzes the initial step of the lipid cycle reactions in the biosynthesis of the cell wall peptidoglycan: transfers peptidoglycan precursor phospho-MurNAc-pentapeptide from UDP-MurNAc-pentapeptide onto the lipid carrier undecaprenyl phosphate, yielding undecaprenyl-pyrophosphoryl-MurNAc-pentapeptide, known as lipid I.</text>
</comment>
<comment type="catalytic activity">
    <reaction evidence="1">
        <text>UDP-N-acetyl-alpha-D-muramoyl-L-alanyl-gamma-D-glutamyl-meso-2,6-diaminopimeloyl-D-alanyl-D-alanine + di-trans,octa-cis-undecaprenyl phosphate = di-trans,octa-cis-undecaprenyl diphospho-N-acetyl-alpha-D-muramoyl-L-alanyl-D-glutamyl-meso-2,6-diaminopimeloyl-D-alanyl-D-alanine + UMP</text>
        <dbReference type="Rhea" id="RHEA:28386"/>
        <dbReference type="ChEBI" id="CHEBI:57865"/>
        <dbReference type="ChEBI" id="CHEBI:60392"/>
        <dbReference type="ChEBI" id="CHEBI:61386"/>
        <dbReference type="ChEBI" id="CHEBI:61387"/>
        <dbReference type="EC" id="2.7.8.13"/>
    </reaction>
</comment>
<comment type="cofactor">
    <cofactor evidence="1">
        <name>Mg(2+)</name>
        <dbReference type="ChEBI" id="CHEBI:18420"/>
    </cofactor>
</comment>
<comment type="pathway">
    <text evidence="1">Cell wall biogenesis; peptidoglycan biosynthesis.</text>
</comment>
<comment type="subcellular location">
    <subcellularLocation>
        <location evidence="1">Cell inner membrane</location>
        <topology evidence="1">Multi-pass membrane protein</topology>
    </subcellularLocation>
</comment>
<comment type="similarity">
    <text evidence="1">Belongs to the glycosyltransferase 4 family. MraY subfamily.</text>
</comment>
<keyword id="KW-0131">Cell cycle</keyword>
<keyword id="KW-0132">Cell division</keyword>
<keyword id="KW-0997">Cell inner membrane</keyword>
<keyword id="KW-1003">Cell membrane</keyword>
<keyword id="KW-0133">Cell shape</keyword>
<keyword id="KW-0961">Cell wall biogenesis/degradation</keyword>
<keyword id="KW-0460">Magnesium</keyword>
<keyword id="KW-0472">Membrane</keyword>
<keyword id="KW-0479">Metal-binding</keyword>
<keyword id="KW-0573">Peptidoglycan synthesis</keyword>
<keyword id="KW-0808">Transferase</keyword>
<keyword id="KW-0812">Transmembrane</keyword>
<keyword id="KW-1133">Transmembrane helix</keyword>
<gene>
    <name evidence="1" type="primary">mraY</name>
    <name type="ordered locus">Fjoh_1807</name>
</gene>
<evidence type="ECO:0000255" key="1">
    <source>
        <dbReference type="HAMAP-Rule" id="MF_00038"/>
    </source>
</evidence>
<accession>A5FIY0</accession>
<organism>
    <name type="scientific">Flavobacterium johnsoniae (strain ATCC 17061 / DSM 2064 / JCM 8514 / BCRC 14874 / CCUG 350202 / NBRC 14942 / NCIMB 11054 / UW101)</name>
    <name type="common">Cytophaga johnsonae</name>
    <dbReference type="NCBI Taxonomy" id="376686"/>
    <lineage>
        <taxon>Bacteria</taxon>
        <taxon>Pseudomonadati</taxon>
        <taxon>Bacteroidota</taxon>
        <taxon>Flavobacteriia</taxon>
        <taxon>Flavobacteriales</taxon>
        <taxon>Flavobacteriaceae</taxon>
        <taxon>Flavobacterium</taxon>
    </lineage>
</organism>
<dbReference type="EC" id="2.7.8.13" evidence="1"/>
<dbReference type="EMBL" id="CP000685">
    <property type="protein sequence ID" value="ABQ04839.1"/>
    <property type="molecule type" value="Genomic_DNA"/>
</dbReference>
<dbReference type="RefSeq" id="WP_012023883.1">
    <property type="nucleotide sequence ID" value="NC_009441.1"/>
</dbReference>
<dbReference type="SMR" id="A5FIY0"/>
<dbReference type="STRING" id="376686.Fjoh_1807"/>
<dbReference type="KEGG" id="fjo:Fjoh_1807"/>
<dbReference type="eggNOG" id="COG0472">
    <property type="taxonomic scope" value="Bacteria"/>
</dbReference>
<dbReference type="HOGENOM" id="CLU_023982_0_0_10"/>
<dbReference type="OrthoDB" id="9805475at2"/>
<dbReference type="UniPathway" id="UPA00219"/>
<dbReference type="Proteomes" id="UP000006694">
    <property type="component" value="Chromosome"/>
</dbReference>
<dbReference type="GO" id="GO:0005886">
    <property type="term" value="C:plasma membrane"/>
    <property type="evidence" value="ECO:0007669"/>
    <property type="project" value="UniProtKB-SubCell"/>
</dbReference>
<dbReference type="GO" id="GO:0046872">
    <property type="term" value="F:metal ion binding"/>
    <property type="evidence" value="ECO:0007669"/>
    <property type="project" value="UniProtKB-KW"/>
</dbReference>
<dbReference type="GO" id="GO:0008963">
    <property type="term" value="F:phospho-N-acetylmuramoyl-pentapeptide-transferase activity"/>
    <property type="evidence" value="ECO:0007669"/>
    <property type="project" value="UniProtKB-UniRule"/>
</dbReference>
<dbReference type="GO" id="GO:0051992">
    <property type="term" value="F:UDP-N-acetylmuramoyl-L-alanyl-D-glutamyl-meso-2,6-diaminopimelyl-D-alanyl-D-alanine:undecaprenyl-phosphate transferase activity"/>
    <property type="evidence" value="ECO:0007669"/>
    <property type="project" value="RHEA"/>
</dbReference>
<dbReference type="GO" id="GO:0051301">
    <property type="term" value="P:cell division"/>
    <property type="evidence" value="ECO:0007669"/>
    <property type="project" value="UniProtKB-KW"/>
</dbReference>
<dbReference type="GO" id="GO:0071555">
    <property type="term" value="P:cell wall organization"/>
    <property type="evidence" value="ECO:0007669"/>
    <property type="project" value="UniProtKB-KW"/>
</dbReference>
<dbReference type="GO" id="GO:0009252">
    <property type="term" value="P:peptidoglycan biosynthetic process"/>
    <property type="evidence" value="ECO:0007669"/>
    <property type="project" value="UniProtKB-UniRule"/>
</dbReference>
<dbReference type="GO" id="GO:0008360">
    <property type="term" value="P:regulation of cell shape"/>
    <property type="evidence" value="ECO:0007669"/>
    <property type="project" value="UniProtKB-KW"/>
</dbReference>
<dbReference type="CDD" id="cd06852">
    <property type="entry name" value="GT_MraY"/>
    <property type="match status" value="1"/>
</dbReference>
<dbReference type="HAMAP" id="MF_00038">
    <property type="entry name" value="MraY"/>
    <property type="match status" value="1"/>
</dbReference>
<dbReference type="InterPro" id="IPR000715">
    <property type="entry name" value="Glycosyl_transferase_4"/>
</dbReference>
<dbReference type="InterPro" id="IPR003524">
    <property type="entry name" value="PNAcMuramoyl-5peptid_Trfase"/>
</dbReference>
<dbReference type="InterPro" id="IPR018480">
    <property type="entry name" value="PNAcMuramoyl-5peptid_Trfase_CS"/>
</dbReference>
<dbReference type="NCBIfam" id="TIGR00445">
    <property type="entry name" value="mraY"/>
    <property type="match status" value="1"/>
</dbReference>
<dbReference type="PANTHER" id="PTHR22926">
    <property type="entry name" value="PHOSPHO-N-ACETYLMURAMOYL-PENTAPEPTIDE-TRANSFERASE"/>
    <property type="match status" value="1"/>
</dbReference>
<dbReference type="PANTHER" id="PTHR22926:SF5">
    <property type="entry name" value="PHOSPHO-N-ACETYLMURAMOYL-PENTAPEPTIDE-TRANSFERASE HOMOLOG"/>
    <property type="match status" value="1"/>
</dbReference>
<dbReference type="Pfam" id="PF00953">
    <property type="entry name" value="Glycos_transf_4"/>
    <property type="match status" value="1"/>
</dbReference>
<dbReference type="Pfam" id="PF10555">
    <property type="entry name" value="MraY_sig1"/>
    <property type="match status" value="1"/>
</dbReference>
<dbReference type="PROSITE" id="PS01347">
    <property type="entry name" value="MRAY_1"/>
    <property type="match status" value="1"/>
</dbReference>
<dbReference type="PROSITE" id="PS01348">
    <property type="entry name" value="MRAY_2"/>
    <property type="match status" value="1"/>
</dbReference>
<protein>
    <recommendedName>
        <fullName evidence="1">Phospho-N-acetylmuramoyl-pentapeptide-transferase</fullName>
        <ecNumber evidence="1">2.7.8.13</ecNumber>
    </recommendedName>
    <alternativeName>
        <fullName evidence="1">UDP-MurNAc-pentapeptide phosphotransferase</fullName>
    </alternativeName>
</protein>
<reference key="1">
    <citation type="journal article" date="2009" name="Appl. Environ. Microbiol.">
        <title>Novel features of the polysaccharide-digesting gliding bacterium Flavobacterium johnsoniae as revealed by genome sequence analysis.</title>
        <authorList>
            <person name="McBride M.J."/>
            <person name="Xie G."/>
            <person name="Martens E.C."/>
            <person name="Lapidus A."/>
            <person name="Henrissat B."/>
            <person name="Rhodes R.G."/>
            <person name="Goltsman E."/>
            <person name="Wang W."/>
            <person name="Xu J."/>
            <person name="Hunnicutt D.W."/>
            <person name="Staroscik A.M."/>
            <person name="Hoover T.R."/>
            <person name="Cheng Y.Q."/>
            <person name="Stein J.L."/>
        </authorList>
    </citation>
    <scope>NUCLEOTIDE SEQUENCE [LARGE SCALE GENOMIC DNA]</scope>
    <source>
        <strain>ATCC 17061 / DSM 2064 / JCM 8514 / BCRC 14874 / CCUG 350202 / NBRC 14942 / NCIMB 11054 / UW101</strain>
    </source>
</reference>
<sequence length="410" mass="45314">MLYYLFEYFDKTLDVPGTGVFQYITFRSALAFMLSLLLSTIYGKRVINFLRRQQVGETVRELGLAGQNEKAGTPTMGGLIIIFATLVPVFLFARLHNIYIVLLIVTTLWMGTIGFVDDYIKIFKKDKQGLKGIFKVIGQVGLGIIVGAVLYFNPAVTVRTDTGKTDVFKTAANTTVVLPAPVEEKSTATTIPFVKNNEFDYAEVLSFMGDGYEKWAWLVFIPVVIFIITAVSNGANLTDGIDGLAAGTSAVSVLALGIFTFVSGNIIFSNYLNIMYIPNSGEMTVFISAFVGALIGFLWYNSFPASVFMGDTGSLTIGGIIAVLAIAVRKEILIVLFCGIFLAESASVIIQVTYFKYTKKRFGEGRRIFLMSPLHHHYQKKGYHESKIVTRFWIVAVMLAILSIVTLKLR</sequence>
<proteinExistence type="inferred from homology"/>
<feature type="chain" id="PRO_1000074543" description="Phospho-N-acetylmuramoyl-pentapeptide-transferase">
    <location>
        <begin position="1"/>
        <end position="410"/>
    </location>
</feature>
<feature type="transmembrane region" description="Helical" evidence="1">
    <location>
        <begin position="23"/>
        <end position="43"/>
    </location>
</feature>
<feature type="transmembrane region" description="Helical" evidence="1">
    <location>
        <begin position="73"/>
        <end position="93"/>
    </location>
</feature>
<feature type="transmembrane region" description="Helical" evidence="1">
    <location>
        <begin position="96"/>
        <end position="116"/>
    </location>
</feature>
<feature type="transmembrane region" description="Helical" evidence="1">
    <location>
        <begin position="132"/>
        <end position="152"/>
    </location>
</feature>
<feature type="transmembrane region" description="Helical" evidence="1">
    <location>
        <begin position="215"/>
        <end position="235"/>
    </location>
</feature>
<feature type="transmembrane region" description="Helical" evidence="1">
    <location>
        <begin position="248"/>
        <end position="268"/>
    </location>
</feature>
<feature type="transmembrane region" description="Helical" evidence="1">
    <location>
        <begin position="285"/>
        <end position="305"/>
    </location>
</feature>
<feature type="transmembrane region" description="Helical" evidence="1">
    <location>
        <begin position="307"/>
        <end position="327"/>
    </location>
</feature>
<feature type="transmembrane region" description="Helical" evidence="1">
    <location>
        <begin position="332"/>
        <end position="352"/>
    </location>
</feature>
<feature type="transmembrane region" description="Helical" evidence="1">
    <location>
        <begin position="387"/>
        <end position="407"/>
    </location>
</feature>
<name>MRAY_FLAJ1</name>